<evidence type="ECO:0000255" key="1">
    <source>
        <dbReference type="HAMAP-Rule" id="MF_01894"/>
    </source>
</evidence>
<evidence type="ECO:0000305" key="2"/>
<sequence>MKLTRLRLHGFKSFVEPTDFMIEPGLTGVVGPNGCGKSNLVEALRWAMGETSHKSLRATDMDAVIFAGSGNRPARNHAEVVMSIDNSDRTAPAALNDADTLDISRRIEREAGSVYRINGREVRARDVQLLFADAATGARSPALVHQGKIGEIIQAKPEQRRRVLEDAAGVAGLHARRHEAELRLKAAETNLTRVEDVIGQLSTQVDGLKKQARQAIRFREVAAKVRKTEAMLYHLRWRDAQAEVGAAAEVHDLGVRQLAECTRVQAEASRIQADRASTLPSLREAEARAAAGLQRLINAREQLDREEARAKERVVELERRLTQFSSDVAREQQQAIDADAALERLDTEDVELREEILERVEKRSGVDERVAEADASLGEAEQLFAELTTQLAELTARRNQFEQSVRTHRDRLARLDTEIKNVESEIDRLSAETSGAGDLTELAEAVEIAQELLAEQEGAVQEAEAAQIAARQTLDGSRAPLVDAEKKVQRLETEAKTISKILNGETKNLWPPIIDGITVAKGYEKAIGAVLGDDLDAPVDPSAPMRWTDVGVQPEDPALPEGVEALAQHVTAPPELARRLAQIGVVTKERGNELCEQLKTGQRLVSLDGDVWRWDGFVASAHAPTGAARRLAERARLTDIENELEQARIEATAKRQALETAEADLKMAAAAETASRESLRGARREVDAARERFAAAEREVNRHAARKSALAEAQSRLATDRAEAEAALENAEAQIADLEPNTEAEARLAAVRGDIDGRRRIAAQIRAEAQALAREAELADKRLQAIAAERMDWQKRKAGAASQIATVEERVAELTAERAELENAPEVFAEKRSAVITEIEFAEADRRAAADALAAAEQAMSETDRLAKASLEQLSSAREACARAEERMEAARRRLEDVEREIRDMLEVEPQAAAQLAEIVEGAELPPLAEIEESLDKLRRDRERLGAVNLRAEEELNEVETQHGTLAAERDDLVEAIKKLRTGIQSLNKEARERLLASFDVVNGHFKRLFTTLFGGGEAELKLIESDDPLEAGLDIIAKPPGKKPQSLSLLSGGEQALTAMALIFAVFLTNPSPICVLDEVDAPLDDHNVERFCDLLTDMAKTTETRFITITHNPITMARMNRLFGVTMAERGVSQLVSVDLQGAVDILDQNVA</sequence>
<gene>
    <name evidence="1" type="primary">smc</name>
    <name type="ordered locus">RPA4489</name>
</gene>
<name>SMC_RHOPA</name>
<keyword id="KW-0067">ATP-binding</keyword>
<keyword id="KW-0175">Coiled coil</keyword>
<keyword id="KW-0963">Cytoplasm</keyword>
<keyword id="KW-0238">DNA-binding</keyword>
<keyword id="KW-0547">Nucleotide-binding</keyword>
<accession>Q6N1B7</accession>
<dbReference type="EMBL" id="BX572607">
    <property type="protein sequence ID" value="CAE29930.1"/>
    <property type="status" value="ALT_INIT"/>
    <property type="molecule type" value="Genomic_DNA"/>
</dbReference>
<dbReference type="RefSeq" id="WP_042441319.1">
    <property type="nucleotide sequence ID" value="NZ_CP116810.1"/>
</dbReference>
<dbReference type="SMR" id="Q6N1B7"/>
<dbReference type="STRING" id="258594.RPA4489"/>
<dbReference type="GeneID" id="66895634"/>
<dbReference type="eggNOG" id="COG1196">
    <property type="taxonomic scope" value="Bacteria"/>
</dbReference>
<dbReference type="HOGENOM" id="CLU_001042_2_2_5"/>
<dbReference type="GO" id="GO:0005694">
    <property type="term" value="C:chromosome"/>
    <property type="evidence" value="ECO:0007669"/>
    <property type="project" value="InterPro"/>
</dbReference>
<dbReference type="GO" id="GO:0005737">
    <property type="term" value="C:cytoplasm"/>
    <property type="evidence" value="ECO:0007669"/>
    <property type="project" value="UniProtKB-SubCell"/>
</dbReference>
<dbReference type="GO" id="GO:0005524">
    <property type="term" value="F:ATP binding"/>
    <property type="evidence" value="ECO:0007669"/>
    <property type="project" value="UniProtKB-UniRule"/>
</dbReference>
<dbReference type="GO" id="GO:0016887">
    <property type="term" value="F:ATP hydrolysis activity"/>
    <property type="evidence" value="ECO:0007669"/>
    <property type="project" value="InterPro"/>
</dbReference>
<dbReference type="GO" id="GO:0003677">
    <property type="term" value="F:DNA binding"/>
    <property type="evidence" value="ECO:0007669"/>
    <property type="project" value="UniProtKB-UniRule"/>
</dbReference>
<dbReference type="GO" id="GO:0030261">
    <property type="term" value="P:chromosome condensation"/>
    <property type="evidence" value="ECO:0007669"/>
    <property type="project" value="InterPro"/>
</dbReference>
<dbReference type="GO" id="GO:0007059">
    <property type="term" value="P:chromosome segregation"/>
    <property type="evidence" value="ECO:0007669"/>
    <property type="project" value="UniProtKB-UniRule"/>
</dbReference>
<dbReference type="GO" id="GO:0006260">
    <property type="term" value="P:DNA replication"/>
    <property type="evidence" value="ECO:0007669"/>
    <property type="project" value="UniProtKB-UniRule"/>
</dbReference>
<dbReference type="GO" id="GO:0007062">
    <property type="term" value="P:sister chromatid cohesion"/>
    <property type="evidence" value="ECO:0007669"/>
    <property type="project" value="InterPro"/>
</dbReference>
<dbReference type="CDD" id="cd03278">
    <property type="entry name" value="ABC_SMC_barmotin"/>
    <property type="match status" value="1"/>
</dbReference>
<dbReference type="FunFam" id="3.40.50.300:FF:000901">
    <property type="entry name" value="Chromosome partition protein Smc"/>
    <property type="match status" value="1"/>
</dbReference>
<dbReference type="Gene3D" id="3.40.50.300">
    <property type="entry name" value="P-loop containing nucleotide triphosphate hydrolases"/>
    <property type="match status" value="2"/>
</dbReference>
<dbReference type="HAMAP" id="MF_01894">
    <property type="entry name" value="Smc_prok"/>
    <property type="match status" value="1"/>
</dbReference>
<dbReference type="InterPro" id="IPR027417">
    <property type="entry name" value="P-loop_NTPase"/>
</dbReference>
<dbReference type="InterPro" id="IPR003395">
    <property type="entry name" value="RecF/RecN/SMC_N"/>
</dbReference>
<dbReference type="InterPro" id="IPR024704">
    <property type="entry name" value="SMC"/>
</dbReference>
<dbReference type="InterPro" id="IPR010935">
    <property type="entry name" value="SMC_hinge"/>
</dbReference>
<dbReference type="InterPro" id="IPR036277">
    <property type="entry name" value="SMC_hinge_sf"/>
</dbReference>
<dbReference type="InterPro" id="IPR011890">
    <property type="entry name" value="SMC_prok"/>
</dbReference>
<dbReference type="NCBIfam" id="TIGR02168">
    <property type="entry name" value="SMC_prok_B"/>
    <property type="match status" value="1"/>
</dbReference>
<dbReference type="PANTHER" id="PTHR43977">
    <property type="entry name" value="STRUCTURAL MAINTENANCE OF CHROMOSOMES PROTEIN 3"/>
    <property type="match status" value="1"/>
</dbReference>
<dbReference type="Pfam" id="PF06470">
    <property type="entry name" value="SMC_hinge"/>
    <property type="match status" value="1"/>
</dbReference>
<dbReference type="Pfam" id="PF02463">
    <property type="entry name" value="SMC_N"/>
    <property type="match status" value="1"/>
</dbReference>
<dbReference type="PIRSF" id="PIRSF005719">
    <property type="entry name" value="SMC"/>
    <property type="match status" value="1"/>
</dbReference>
<dbReference type="SUPFAM" id="SSF52540">
    <property type="entry name" value="P-loop containing nucleoside triphosphate hydrolases"/>
    <property type="match status" value="1"/>
</dbReference>
<dbReference type="SUPFAM" id="SSF75553">
    <property type="entry name" value="Smc hinge domain"/>
    <property type="match status" value="1"/>
</dbReference>
<comment type="function">
    <text evidence="1">Required for chromosome condensation and partitioning.</text>
</comment>
<comment type="subunit">
    <text evidence="1">Homodimer.</text>
</comment>
<comment type="subcellular location">
    <subcellularLocation>
        <location evidence="1">Cytoplasm</location>
    </subcellularLocation>
</comment>
<comment type="domain">
    <text evidence="1">Contains large globular domains required for ATP hydrolysis at each terminus and a third globular domain forming a flexible hinge near the middle of the molecule. These domains are separated by coiled-coil structures.</text>
</comment>
<comment type="similarity">
    <text evidence="1">Belongs to the SMC family.</text>
</comment>
<comment type="sequence caution" evidence="2">
    <conflict type="erroneous initiation">
        <sequence resource="EMBL-CDS" id="CAE29930"/>
    </conflict>
    <text>Extended N-terminus.</text>
</comment>
<protein>
    <recommendedName>
        <fullName evidence="1">Chromosome partition protein Smc</fullName>
    </recommendedName>
</protein>
<proteinExistence type="inferred from homology"/>
<reference key="1">
    <citation type="journal article" date="2004" name="Nat. Biotechnol.">
        <title>Complete genome sequence of the metabolically versatile photosynthetic bacterium Rhodopseudomonas palustris.</title>
        <authorList>
            <person name="Larimer F.W."/>
            <person name="Chain P."/>
            <person name="Hauser L."/>
            <person name="Lamerdin J.E."/>
            <person name="Malfatti S."/>
            <person name="Do L."/>
            <person name="Land M.L."/>
            <person name="Pelletier D.A."/>
            <person name="Beatty J.T."/>
            <person name="Lang A.S."/>
            <person name="Tabita F.R."/>
            <person name="Gibson J.L."/>
            <person name="Hanson T.E."/>
            <person name="Bobst C."/>
            <person name="Torres y Torres J.L."/>
            <person name="Peres C."/>
            <person name="Harrison F.H."/>
            <person name="Gibson J."/>
            <person name="Harwood C.S."/>
        </authorList>
    </citation>
    <scope>NUCLEOTIDE SEQUENCE [LARGE SCALE GENOMIC DNA]</scope>
    <source>
        <strain>ATCC BAA-98 / CGA009</strain>
    </source>
</reference>
<organism>
    <name type="scientific">Rhodopseudomonas palustris (strain ATCC BAA-98 / CGA009)</name>
    <dbReference type="NCBI Taxonomy" id="258594"/>
    <lineage>
        <taxon>Bacteria</taxon>
        <taxon>Pseudomonadati</taxon>
        <taxon>Pseudomonadota</taxon>
        <taxon>Alphaproteobacteria</taxon>
        <taxon>Hyphomicrobiales</taxon>
        <taxon>Nitrobacteraceae</taxon>
        <taxon>Rhodopseudomonas</taxon>
    </lineage>
</organism>
<feature type="chain" id="PRO_0000409280" description="Chromosome partition protein Smc">
    <location>
        <begin position="1"/>
        <end position="1154"/>
    </location>
</feature>
<feature type="coiled-coil region" evidence="1">
    <location>
        <begin position="170"/>
        <end position="215"/>
    </location>
</feature>
<feature type="coiled-coil region" evidence="1">
    <location>
        <begin position="282"/>
        <end position="505"/>
    </location>
</feature>
<feature type="coiled-coil region" evidence="1">
    <location>
        <begin position="627"/>
        <end position="993"/>
    </location>
</feature>
<feature type="binding site" evidence="1">
    <location>
        <begin position="32"/>
        <end position="39"/>
    </location>
    <ligand>
        <name>ATP</name>
        <dbReference type="ChEBI" id="CHEBI:30616"/>
    </ligand>
</feature>